<sequence length="368" mass="40949">MVTGWHRPTWIEIDRAAIRENIKNEQNKLPDKVALWAVVKANAYGHGIIETAKIAKEAGAKGFCVAILDEALALREAGFRNEFILVLGATRKEDANLAAKNNISVTVFREDWLDDLTLEAPLRIHLKVDSGMGRLGIRSREEAQRIETTIAIDHQMILEGIYTHFATADQLETSYFEQQLAKFQAILSSLTTRPTFVHTANSAASLLQPQIDFDAIRFGISMYGLTPSTEIKNSLPFELKPALALYTEMVHVKELAPGDSVSYGATYTATEKEWVATLPIGYADGLIRHYSGFHVLVEGERAPIIGRICMDQTIIKLPREFQTGTKVTIIGSDHGNKVTADDAAEYLGTINYEVTCLLTERIPRKYIN</sequence>
<gene>
    <name type="primary">alr</name>
    <name type="ordered locus">lin0885</name>
</gene>
<organism>
    <name type="scientific">Listeria innocua serovar 6a (strain ATCC BAA-680 / CLIP 11262)</name>
    <dbReference type="NCBI Taxonomy" id="272626"/>
    <lineage>
        <taxon>Bacteria</taxon>
        <taxon>Bacillati</taxon>
        <taxon>Bacillota</taxon>
        <taxon>Bacilli</taxon>
        <taxon>Bacillales</taxon>
        <taxon>Listeriaceae</taxon>
        <taxon>Listeria</taxon>
    </lineage>
</organism>
<protein>
    <recommendedName>
        <fullName evidence="1">Alanine racemase</fullName>
        <ecNumber evidence="1">5.1.1.1</ecNumber>
    </recommendedName>
</protein>
<name>ALR_LISIN</name>
<accession>Q92DC9</accession>
<keyword id="KW-0413">Isomerase</keyword>
<keyword id="KW-0663">Pyridoxal phosphate</keyword>
<comment type="function">
    <text evidence="1">Catalyzes the interconversion of L-alanine and D-alanine. May also act on other amino acids.</text>
</comment>
<comment type="catalytic activity">
    <reaction evidence="1">
        <text>L-alanine = D-alanine</text>
        <dbReference type="Rhea" id="RHEA:20249"/>
        <dbReference type="ChEBI" id="CHEBI:57416"/>
        <dbReference type="ChEBI" id="CHEBI:57972"/>
        <dbReference type="EC" id="5.1.1.1"/>
    </reaction>
</comment>
<comment type="cofactor">
    <cofactor evidence="1">
        <name>pyridoxal 5'-phosphate</name>
        <dbReference type="ChEBI" id="CHEBI:597326"/>
    </cofactor>
</comment>
<comment type="pathway">
    <text evidence="1">Amino-acid biosynthesis; D-alanine biosynthesis; D-alanine from L-alanine: step 1/1.</text>
</comment>
<comment type="similarity">
    <text evidence="1">Belongs to the alanine racemase family.</text>
</comment>
<dbReference type="EC" id="5.1.1.1" evidence="1"/>
<dbReference type="EMBL" id="AL596166">
    <property type="protein sequence ID" value="CAC96117.1"/>
    <property type="molecule type" value="Genomic_DNA"/>
</dbReference>
<dbReference type="PIR" id="AE1543">
    <property type="entry name" value="AE1543"/>
</dbReference>
<dbReference type="RefSeq" id="WP_010990665.1">
    <property type="nucleotide sequence ID" value="NC_003212.1"/>
</dbReference>
<dbReference type="SMR" id="Q92DC9"/>
<dbReference type="STRING" id="272626.gene:17565212"/>
<dbReference type="KEGG" id="lin:lin0885"/>
<dbReference type="eggNOG" id="COG0787">
    <property type="taxonomic scope" value="Bacteria"/>
</dbReference>
<dbReference type="HOGENOM" id="CLU_028393_2_1_9"/>
<dbReference type="OrthoDB" id="9813814at2"/>
<dbReference type="UniPathway" id="UPA00042">
    <property type="reaction ID" value="UER00497"/>
</dbReference>
<dbReference type="Proteomes" id="UP000002513">
    <property type="component" value="Chromosome"/>
</dbReference>
<dbReference type="GO" id="GO:0005829">
    <property type="term" value="C:cytosol"/>
    <property type="evidence" value="ECO:0007669"/>
    <property type="project" value="TreeGrafter"/>
</dbReference>
<dbReference type="GO" id="GO:0008784">
    <property type="term" value="F:alanine racemase activity"/>
    <property type="evidence" value="ECO:0007669"/>
    <property type="project" value="UniProtKB-UniRule"/>
</dbReference>
<dbReference type="GO" id="GO:0030170">
    <property type="term" value="F:pyridoxal phosphate binding"/>
    <property type="evidence" value="ECO:0007669"/>
    <property type="project" value="UniProtKB-UniRule"/>
</dbReference>
<dbReference type="GO" id="GO:0030632">
    <property type="term" value="P:D-alanine biosynthetic process"/>
    <property type="evidence" value="ECO:0007669"/>
    <property type="project" value="UniProtKB-UniRule"/>
</dbReference>
<dbReference type="GO" id="GO:0009252">
    <property type="term" value="P:peptidoglycan biosynthetic process"/>
    <property type="evidence" value="ECO:0007669"/>
    <property type="project" value="TreeGrafter"/>
</dbReference>
<dbReference type="CDD" id="cd00430">
    <property type="entry name" value="PLPDE_III_AR"/>
    <property type="match status" value="1"/>
</dbReference>
<dbReference type="FunFam" id="2.40.37.10:FF:000006">
    <property type="entry name" value="Alanine racemase"/>
    <property type="match status" value="1"/>
</dbReference>
<dbReference type="FunFam" id="3.20.20.10:FF:000002">
    <property type="entry name" value="Alanine racemase"/>
    <property type="match status" value="1"/>
</dbReference>
<dbReference type="Gene3D" id="3.20.20.10">
    <property type="entry name" value="Alanine racemase"/>
    <property type="match status" value="1"/>
</dbReference>
<dbReference type="Gene3D" id="2.40.37.10">
    <property type="entry name" value="Lyase, Ornithine Decarboxylase, Chain A, domain 1"/>
    <property type="match status" value="1"/>
</dbReference>
<dbReference type="HAMAP" id="MF_01201">
    <property type="entry name" value="Ala_racemase"/>
    <property type="match status" value="1"/>
</dbReference>
<dbReference type="InterPro" id="IPR000821">
    <property type="entry name" value="Ala_racemase"/>
</dbReference>
<dbReference type="InterPro" id="IPR009006">
    <property type="entry name" value="Ala_racemase/Decarboxylase_C"/>
</dbReference>
<dbReference type="InterPro" id="IPR011079">
    <property type="entry name" value="Ala_racemase_C"/>
</dbReference>
<dbReference type="InterPro" id="IPR001608">
    <property type="entry name" value="Ala_racemase_N"/>
</dbReference>
<dbReference type="InterPro" id="IPR020622">
    <property type="entry name" value="Ala_racemase_pyridoxalP-BS"/>
</dbReference>
<dbReference type="InterPro" id="IPR029066">
    <property type="entry name" value="PLP-binding_barrel"/>
</dbReference>
<dbReference type="NCBIfam" id="TIGR00492">
    <property type="entry name" value="alr"/>
    <property type="match status" value="1"/>
</dbReference>
<dbReference type="PANTHER" id="PTHR30511">
    <property type="entry name" value="ALANINE RACEMASE"/>
    <property type="match status" value="1"/>
</dbReference>
<dbReference type="PANTHER" id="PTHR30511:SF0">
    <property type="entry name" value="ALANINE RACEMASE, CATABOLIC-RELATED"/>
    <property type="match status" value="1"/>
</dbReference>
<dbReference type="Pfam" id="PF00842">
    <property type="entry name" value="Ala_racemase_C"/>
    <property type="match status" value="1"/>
</dbReference>
<dbReference type="Pfam" id="PF01168">
    <property type="entry name" value="Ala_racemase_N"/>
    <property type="match status" value="1"/>
</dbReference>
<dbReference type="PRINTS" id="PR00992">
    <property type="entry name" value="ALARACEMASE"/>
</dbReference>
<dbReference type="SMART" id="SM01005">
    <property type="entry name" value="Ala_racemase_C"/>
    <property type="match status" value="1"/>
</dbReference>
<dbReference type="SUPFAM" id="SSF50621">
    <property type="entry name" value="Alanine racemase C-terminal domain-like"/>
    <property type="match status" value="1"/>
</dbReference>
<dbReference type="SUPFAM" id="SSF51419">
    <property type="entry name" value="PLP-binding barrel"/>
    <property type="match status" value="1"/>
</dbReference>
<dbReference type="PROSITE" id="PS00395">
    <property type="entry name" value="ALANINE_RACEMASE"/>
    <property type="match status" value="1"/>
</dbReference>
<evidence type="ECO:0000255" key="1">
    <source>
        <dbReference type="HAMAP-Rule" id="MF_01201"/>
    </source>
</evidence>
<reference key="1">
    <citation type="journal article" date="2001" name="Science">
        <title>Comparative genomics of Listeria species.</title>
        <authorList>
            <person name="Glaser P."/>
            <person name="Frangeul L."/>
            <person name="Buchrieser C."/>
            <person name="Rusniok C."/>
            <person name="Amend A."/>
            <person name="Baquero F."/>
            <person name="Berche P."/>
            <person name="Bloecker H."/>
            <person name="Brandt P."/>
            <person name="Chakraborty T."/>
            <person name="Charbit A."/>
            <person name="Chetouani F."/>
            <person name="Couve E."/>
            <person name="de Daruvar A."/>
            <person name="Dehoux P."/>
            <person name="Domann E."/>
            <person name="Dominguez-Bernal G."/>
            <person name="Duchaud E."/>
            <person name="Durant L."/>
            <person name="Dussurget O."/>
            <person name="Entian K.-D."/>
            <person name="Fsihi H."/>
            <person name="Garcia-del Portillo F."/>
            <person name="Garrido P."/>
            <person name="Gautier L."/>
            <person name="Goebel W."/>
            <person name="Gomez-Lopez N."/>
            <person name="Hain T."/>
            <person name="Hauf J."/>
            <person name="Jackson D."/>
            <person name="Jones L.-M."/>
            <person name="Kaerst U."/>
            <person name="Kreft J."/>
            <person name="Kuhn M."/>
            <person name="Kunst F."/>
            <person name="Kurapkat G."/>
            <person name="Madueno E."/>
            <person name="Maitournam A."/>
            <person name="Mata Vicente J."/>
            <person name="Ng E."/>
            <person name="Nedjari H."/>
            <person name="Nordsiek G."/>
            <person name="Novella S."/>
            <person name="de Pablos B."/>
            <person name="Perez-Diaz J.-C."/>
            <person name="Purcell R."/>
            <person name="Remmel B."/>
            <person name="Rose M."/>
            <person name="Schlueter T."/>
            <person name="Simoes N."/>
            <person name="Tierrez A."/>
            <person name="Vazquez-Boland J.-A."/>
            <person name="Voss H."/>
            <person name="Wehland J."/>
            <person name="Cossart P."/>
        </authorList>
    </citation>
    <scope>NUCLEOTIDE SEQUENCE [LARGE SCALE GENOMIC DNA]</scope>
    <source>
        <strain>ATCC BAA-680 / CLIP 11262</strain>
    </source>
</reference>
<feature type="chain" id="PRO_0000114532" description="Alanine racemase">
    <location>
        <begin position="1"/>
        <end position="368"/>
    </location>
</feature>
<feature type="active site" description="Proton acceptor; specific for D-alanine" evidence="1">
    <location>
        <position position="40"/>
    </location>
</feature>
<feature type="active site" description="Proton acceptor; specific for L-alanine" evidence="1">
    <location>
        <position position="263"/>
    </location>
</feature>
<feature type="binding site" evidence="1">
    <location>
        <position position="134"/>
    </location>
    <ligand>
        <name>substrate</name>
    </ligand>
</feature>
<feature type="binding site" evidence="1">
    <location>
        <position position="310"/>
    </location>
    <ligand>
        <name>substrate</name>
    </ligand>
</feature>
<feature type="modified residue" description="N6-(pyridoxal phosphate)lysine" evidence="1">
    <location>
        <position position="40"/>
    </location>
</feature>
<proteinExistence type="inferred from homology"/>